<gene>
    <name type="ordered locus">YOL050C</name>
    <name type="ORF">O1284</name>
</gene>
<evidence type="ECO:0000305" key="1"/>
<evidence type="ECO:0000305" key="2">
    <source>
    </source>
</evidence>
<comment type="miscellaneous">
    <text evidence="1">Almost completely overlaps GAL11.</text>
</comment>
<comment type="caution">
    <text evidence="2">Product of a dubious gene prediction unlikely to encode a functional protein. Because of that it is not part of the S.cerevisiae S288c complete/reference proteome set.</text>
</comment>
<sequence length="106" mass="11284">METSNVQVALVQLFQSHTLNCSELVPEVKNGASFVTSCFSLVVAPDFVMNGSSGESTLIFLESLIIFESGDSTEAIESCGLISNTLAFLFLGLPTSILEDVDGDDE</sequence>
<dbReference type="EMBL" id="Z74793">
    <property type="protein sequence ID" value="CAA99057.1"/>
    <property type="molecule type" value="Genomic_DNA"/>
</dbReference>
<dbReference type="EMBL" id="AY693366">
    <property type="protein sequence ID" value="AAT93385.1"/>
    <property type="molecule type" value="Genomic_DNA"/>
</dbReference>
<dbReference type="PIR" id="S66735">
    <property type="entry name" value="S66735"/>
</dbReference>
<dbReference type="DIP" id="DIP-4688N"/>
<dbReference type="PaxDb" id="4932-YOL050C"/>
<dbReference type="EnsemblFungi" id="YOL050C_mRNA">
    <property type="protein sequence ID" value="YOL050C"/>
    <property type="gene ID" value="YOL050C"/>
</dbReference>
<dbReference type="AGR" id="SGD:S000005410"/>
<dbReference type="SGD" id="S000005410">
    <property type="gene designation" value="YOL050C"/>
</dbReference>
<dbReference type="HOGENOM" id="CLU_2225273_0_0_1"/>
<reference key="1">
    <citation type="journal article" date="1997" name="Nature">
        <title>The nucleotide sequence of Saccharomyces cerevisiae chromosome XV.</title>
        <authorList>
            <person name="Dujon B."/>
            <person name="Albermann K."/>
            <person name="Aldea M."/>
            <person name="Alexandraki D."/>
            <person name="Ansorge W."/>
            <person name="Arino J."/>
            <person name="Benes V."/>
            <person name="Bohn C."/>
            <person name="Bolotin-Fukuhara M."/>
            <person name="Bordonne R."/>
            <person name="Boyer J."/>
            <person name="Camasses A."/>
            <person name="Casamayor A."/>
            <person name="Casas C."/>
            <person name="Cheret G."/>
            <person name="Cziepluch C."/>
            <person name="Daignan-Fornier B."/>
            <person name="Dang V.-D."/>
            <person name="de Haan M."/>
            <person name="Delius H."/>
            <person name="Durand P."/>
            <person name="Fairhead C."/>
            <person name="Feldmann H."/>
            <person name="Gaillon L."/>
            <person name="Galisson F."/>
            <person name="Gamo F.-J."/>
            <person name="Gancedo C."/>
            <person name="Goffeau A."/>
            <person name="Goulding S.E."/>
            <person name="Grivell L.A."/>
            <person name="Habbig B."/>
            <person name="Hand N.J."/>
            <person name="Hani J."/>
            <person name="Hattenhorst U."/>
            <person name="Hebling U."/>
            <person name="Hernando Y."/>
            <person name="Herrero E."/>
            <person name="Heumann K."/>
            <person name="Hiesel R."/>
            <person name="Hilger F."/>
            <person name="Hofmann B."/>
            <person name="Hollenberg C.P."/>
            <person name="Hughes B."/>
            <person name="Jauniaux J.-C."/>
            <person name="Kalogeropoulos A."/>
            <person name="Katsoulou C."/>
            <person name="Kordes E."/>
            <person name="Lafuente M.J."/>
            <person name="Landt O."/>
            <person name="Louis E.J."/>
            <person name="Maarse A.C."/>
            <person name="Madania A."/>
            <person name="Mannhaupt G."/>
            <person name="Marck C."/>
            <person name="Martin R.P."/>
            <person name="Mewes H.-W."/>
            <person name="Michaux G."/>
            <person name="Paces V."/>
            <person name="Parle-McDermott A.G."/>
            <person name="Pearson B.M."/>
            <person name="Perrin A."/>
            <person name="Pettersson B."/>
            <person name="Poch O."/>
            <person name="Pohl T.M."/>
            <person name="Poirey R."/>
            <person name="Portetelle D."/>
            <person name="Pujol A."/>
            <person name="Purnelle B."/>
            <person name="Ramezani Rad M."/>
            <person name="Rechmann S."/>
            <person name="Schwager C."/>
            <person name="Schweizer M."/>
            <person name="Sor F."/>
            <person name="Sterky F."/>
            <person name="Tarassov I.A."/>
            <person name="Teodoru C."/>
            <person name="Tettelin H."/>
            <person name="Thierry A."/>
            <person name="Tobiasch E."/>
            <person name="Tzermia M."/>
            <person name="Uhlen M."/>
            <person name="Unseld M."/>
            <person name="Valens M."/>
            <person name="Vandenbol M."/>
            <person name="Vetter I."/>
            <person name="Vlcek C."/>
            <person name="Voet M."/>
            <person name="Volckaert G."/>
            <person name="Voss H."/>
            <person name="Wambutt R."/>
            <person name="Wedler H."/>
            <person name="Wiemann S."/>
            <person name="Winsor B."/>
            <person name="Wolfe K.H."/>
            <person name="Zollner A."/>
            <person name="Zumstein E."/>
            <person name="Kleine K."/>
        </authorList>
    </citation>
    <scope>NUCLEOTIDE SEQUENCE [LARGE SCALE GENOMIC DNA]</scope>
    <source>
        <strain>ATCC 204508 / S288c</strain>
    </source>
</reference>
<reference key="2">
    <citation type="journal article" date="2014" name="G3 (Bethesda)">
        <title>The reference genome sequence of Saccharomyces cerevisiae: Then and now.</title>
        <authorList>
            <person name="Engel S.R."/>
            <person name="Dietrich F.S."/>
            <person name="Fisk D.G."/>
            <person name="Binkley G."/>
            <person name="Balakrishnan R."/>
            <person name="Costanzo M.C."/>
            <person name="Dwight S.S."/>
            <person name="Hitz B.C."/>
            <person name="Karra K."/>
            <person name="Nash R.S."/>
            <person name="Weng S."/>
            <person name="Wong E.D."/>
            <person name="Lloyd P."/>
            <person name="Skrzypek M.S."/>
            <person name="Miyasato S.R."/>
            <person name="Simison M."/>
            <person name="Cherry J.M."/>
        </authorList>
    </citation>
    <scope>GENOME REANNOTATION</scope>
    <source>
        <strain>ATCC 204508 / S288c</strain>
    </source>
</reference>
<reference key="3">
    <citation type="journal article" date="2007" name="Genome Res.">
        <title>Approaching a complete repository of sequence-verified protein-encoding clones for Saccharomyces cerevisiae.</title>
        <authorList>
            <person name="Hu Y."/>
            <person name="Rolfs A."/>
            <person name="Bhullar B."/>
            <person name="Murthy T.V.S."/>
            <person name="Zhu C."/>
            <person name="Berger M.F."/>
            <person name="Camargo A.A."/>
            <person name="Kelley F."/>
            <person name="McCarron S."/>
            <person name="Jepson D."/>
            <person name="Richardson A."/>
            <person name="Raphael J."/>
            <person name="Moreira D."/>
            <person name="Taycher E."/>
            <person name="Zuo D."/>
            <person name="Mohr S."/>
            <person name="Kane M.F."/>
            <person name="Williamson J."/>
            <person name="Simpson A.J.G."/>
            <person name="Bulyk M.L."/>
            <person name="Harlow E."/>
            <person name="Marsischky G."/>
            <person name="Kolodner R.D."/>
            <person name="LaBaer J."/>
        </authorList>
    </citation>
    <scope>NUCLEOTIDE SEQUENCE [GENOMIC DNA]</scope>
    <source>
        <strain>ATCC 204508 / S288c</strain>
    </source>
</reference>
<accession>Q08222</accession>
<organism>
    <name type="scientific">Saccharomyces cerevisiae (strain ATCC 204508 / S288c)</name>
    <name type="common">Baker's yeast</name>
    <dbReference type="NCBI Taxonomy" id="559292"/>
    <lineage>
        <taxon>Eukaryota</taxon>
        <taxon>Fungi</taxon>
        <taxon>Dikarya</taxon>
        <taxon>Ascomycota</taxon>
        <taxon>Saccharomycotina</taxon>
        <taxon>Saccharomycetes</taxon>
        <taxon>Saccharomycetales</taxon>
        <taxon>Saccharomycetaceae</taxon>
        <taxon>Saccharomyces</taxon>
    </lineage>
</organism>
<proteinExistence type="uncertain"/>
<name>YO050_YEAST</name>
<feature type="chain" id="PRO_0000299691" description="Putative uncharacterized protein YOL050C">
    <location>
        <begin position="1"/>
        <end position="106"/>
    </location>
</feature>
<protein>
    <recommendedName>
        <fullName>Putative uncharacterized protein YOL050C</fullName>
    </recommendedName>
</protein>